<evidence type="ECO:0000255" key="1">
    <source>
        <dbReference type="HAMAP-Rule" id="MF_02052"/>
    </source>
</evidence>
<organism>
    <name type="scientific">Photorhabdus laumondii subsp. laumondii (strain DSM 15139 / CIP 105565 / TT01)</name>
    <name type="common">Photorhabdus luminescens subsp. laumondii</name>
    <dbReference type="NCBI Taxonomy" id="243265"/>
    <lineage>
        <taxon>Bacteria</taxon>
        <taxon>Pseudomonadati</taxon>
        <taxon>Pseudomonadota</taxon>
        <taxon>Gammaproteobacteria</taxon>
        <taxon>Enterobacterales</taxon>
        <taxon>Morganellaceae</taxon>
        <taxon>Photorhabdus</taxon>
    </lineage>
</organism>
<accession>Q7N2D6</accession>
<feature type="chain" id="PRO_0000351525" description="3-hydroxy-5-phosphonooxypentane-2,4-dione thiolase">
    <location>
        <begin position="1"/>
        <end position="291"/>
    </location>
</feature>
<feature type="active site" description="Schiff-base intermediate with substrate" evidence="1">
    <location>
        <position position="203"/>
    </location>
</feature>
<proteinExistence type="inferred from homology"/>
<reference key="1">
    <citation type="journal article" date="2003" name="Nat. Biotechnol.">
        <title>The genome sequence of the entomopathogenic bacterium Photorhabdus luminescens.</title>
        <authorList>
            <person name="Duchaud E."/>
            <person name="Rusniok C."/>
            <person name="Frangeul L."/>
            <person name="Buchrieser C."/>
            <person name="Givaudan A."/>
            <person name="Taourit S."/>
            <person name="Bocs S."/>
            <person name="Boursaux-Eude C."/>
            <person name="Chandler M."/>
            <person name="Charles J.-F."/>
            <person name="Dassa E."/>
            <person name="Derose R."/>
            <person name="Derzelle S."/>
            <person name="Freyssinet G."/>
            <person name="Gaudriault S."/>
            <person name="Medigue C."/>
            <person name="Lanois A."/>
            <person name="Powell K."/>
            <person name="Siguier P."/>
            <person name="Vincent R."/>
            <person name="Wingate V."/>
            <person name="Zouine M."/>
            <person name="Glaser P."/>
            <person name="Boemare N."/>
            <person name="Danchin A."/>
            <person name="Kunst F."/>
        </authorList>
    </citation>
    <scope>NUCLEOTIDE SEQUENCE [LARGE SCALE GENOMIC DNA]</scope>
    <source>
        <strain>DSM 15139 / CIP 105565 / TT01</strain>
    </source>
</reference>
<name>LSRF_PHOLL</name>
<keyword id="KW-0963">Cytoplasm</keyword>
<keyword id="KW-1185">Reference proteome</keyword>
<keyword id="KW-0704">Schiff base</keyword>
<keyword id="KW-0808">Transferase</keyword>
<sequence>MADLDDIKDGKDFGIDIPQKNSLFELKGCGALDWGMQSRLSRIFNPKTNRTVMLAFDHGYFQGPTTGLERIDINIAPLFPHTDVLMCTRGILRSQVPPATNKPVVLRASGANSILTELSNEAVAVAMEDALRLNVCAVAAQVYIGSEYEHQSIKNIIKLVDQGMRYGMPTMAVTGVGKDMVRDQRYFSLATRIAAEMGAQIIKTYYVDTGFERIASGCPVPIVIAGGKKLPEKEALEMCYQAIDQGAAGVDMGRNIFQSEAPVAMLKAVQAVVHQNENASKAYELFLSEKQ</sequence>
<comment type="function">
    <text evidence="1">Involved in the degradation of phospho-AI-2, thereby terminating induction of the lsr operon and closing the AI-2 signaling cycle. Catalyzes the transfer of an acetyl moiety from 3-hydroxy-5-phosphonooxypentane-2,4-dione to CoA to form glycerone phosphate and acetyl-CoA.</text>
</comment>
<comment type="catalytic activity">
    <reaction evidence="1">
        <text>dihydroxyacetone phosphate + acetyl-CoA = 3-hydroxy-2,4-dioxopentyl phosphate + CoA</text>
        <dbReference type="Rhea" id="RHEA:44736"/>
        <dbReference type="ChEBI" id="CHEBI:57287"/>
        <dbReference type="ChEBI" id="CHEBI:57288"/>
        <dbReference type="ChEBI" id="CHEBI:57642"/>
        <dbReference type="ChEBI" id="CHEBI:84359"/>
        <dbReference type="EC" id="2.3.1.245"/>
    </reaction>
</comment>
<comment type="subunit">
    <text evidence="1">Homodecamer.</text>
</comment>
<comment type="subcellular location">
    <subcellularLocation>
        <location evidence="1">Cytoplasm</location>
    </subcellularLocation>
</comment>
<comment type="similarity">
    <text evidence="1">Belongs to the DeoC/FbaB aldolase family.</text>
</comment>
<gene>
    <name evidence="1" type="primary">lsrF</name>
    <name type="ordered locus">plu3147</name>
</gene>
<dbReference type="EC" id="2.3.1.245" evidence="1"/>
<dbReference type="EMBL" id="BX571869">
    <property type="protein sequence ID" value="CAE15521.1"/>
    <property type="molecule type" value="Genomic_DNA"/>
</dbReference>
<dbReference type="RefSeq" id="WP_011147358.1">
    <property type="nucleotide sequence ID" value="NC_005126.1"/>
</dbReference>
<dbReference type="SMR" id="Q7N2D6"/>
<dbReference type="STRING" id="243265.plu3147"/>
<dbReference type="GeneID" id="48849406"/>
<dbReference type="KEGG" id="plu:plu3147"/>
<dbReference type="eggNOG" id="COG1830">
    <property type="taxonomic scope" value="Bacteria"/>
</dbReference>
<dbReference type="HOGENOM" id="CLU_057069_1_0_6"/>
<dbReference type="OrthoDB" id="5915071at2"/>
<dbReference type="Proteomes" id="UP000002514">
    <property type="component" value="Chromosome"/>
</dbReference>
<dbReference type="GO" id="GO:0005737">
    <property type="term" value="C:cytoplasm"/>
    <property type="evidence" value="ECO:0007669"/>
    <property type="project" value="UniProtKB-SubCell"/>
</dbReference>
<dbReference type="GO" id="GO:0016747">
    <property type="term" value="F:acyltransferase activity, transferring groups other than amino-acyl groups"/>
    <property type="evidence" value="ECO:0007669"/>
    <property type="project" value="UniProtKB-UniRule"/>
</dbReference>
<dbReference type="GO" id="GO:0004332">
    <property type="term" value="F:fructose-bisphosphate aldolase activity"/>
    <property type="evidence" value="ECO:0007669"/>
    <property type="project" value="InterPro"/>
</dbReference>
<dbReference type="CDD" id="cd00958">
    <property type="entry name" value="DhnA"/>
    <property type="match status" value="1"/>
</dbReference>
<dbReference type="Gene3D" id="3.20.20.70">
    <property type="entry name" value="Aldolase class I"/>
    <property type="match status" value="1"/>
</dbReference>
<dbReference type="HAMAP" id="MF_02052">
    <property type="entry name" value="LsrF"/>
    <property type="match status" value="1"/>
</dbReference>
<dbReference type="InterPro" id="IPR013785">
    <property type="entry name" value="Aldolase_TIM"/>
</dbReference>
<dbReference type="InterPro" id="IPR002915">
    <property type="entry name" value="DeoC/FbaB/LacD_aldolase"/>
</dbReference>
<dbReference type="InterPro" id="IPR050456">
    <property type="entry name" value="DeoC/FbaB_aldolase"/>
</dbReference>
<dbReference type="InterPro" id="IPR041720">
    <property type="entry name" value="FbaB-like"/>
</dbReference>
<dbReference type="InterPro" id="IPR033673">
    <property type="entry name" value="LsrF"/>
</dbReference>
<dbReference type="NCBIfam" id="NF006081">
    <property type="entry name" value="PRK08227.1"/>
    <property type="match status" value="1"/>
</dbReference>
<dbReference type="PANTHER" id="PTHR47916:SF1">
    <property type="entry name" value="3-HYDROXY-5-PHOSPHONOOXYPENTANE-2,4-DIONE THIOLASE"/>
    <property type="match status" value="1"/>
</dbReference>
<dbReference type="PANTHER" id="PTHR47916">
    <property type="entry name" value="FRUCTOSE-BISPHOSPHATE ALDOLASE CLASS 1"/>
    <property type="match status" value="1"/>
</dbReference>
<dbReference type="Pfam" id="PF01791">
    <property type="entry name" value="DeoC"/>
    <property type="match status" value="1"/>
</dbReference>
<dbReference type="PIRSF" id="PIRSF038992">
    <property type="entry name" value="Aldolase_Ia"/>
    <property type="match status" value="1"/>
</dbReference>
<dbReference type="SMART" id="SM01133">
    <property type="entry name" value="DeoC"/>
    <property type="match status" value="1"/>
</dbReference>
<dbReference type="SUPFAM" id="SSF51569">
    <property type="entry name" value="Aldolase"/>
    <property type="match status" value="1"/>
</dbReference>
<protein>
    <recommendedName>
        <fullName evidence="1">3-hydroxy-5-phosphonooxypentane-2,4-dione thiolase</fullName>
        <ecNumber evidence="1">2.3.1.245</ecNumber>
    </recommendedName>
</protein>